<keyword id="KW-0378">Hydrolase</keyword>
<keyword id="KW-1185">Reference proteome</keyword>
<organism>
    <name type="scientific">Cereibacter sphaeroides (strain ATCC 17023 / DSM 158 / JCM 6121 / CCUG 31486 / LMG 2827 / NBRC 12203 / NCIMB 8253 / ATH 2.4.1.)</name>
    <name type="common">Rhodobacter sphaeroides</name>
    <dbReference type="NCBI Taxonomy" id="272943"/>
    <lineage>
        <taxon>Bacteria</taxon>
        <taxon>Pseudomonadati</taxon>
        <taxon>Pseudomonadota</taxon>
        <taxon>Alphaproteobacteria</taxon>
        <taxon>Rhodobacterales</taxon>
        <taxon>Paracoccaceae</taxon>
        <taxon>Cereibacter</taxon>
    </lineage>
</organism>
<name>Y854_CERS4</name>
<accession>Q3J462</accession>
<comment type="similarity">
    <text evidence="1">Belongs to the UPF0173 family.</text>
</comment>
<proteinExistence type="inferred from homology"/>
<reference key="1">
    <citation type="submission" date="2005-09" db="EMBL/GenBank/DDBJ databases">
        <title>Complete sequence of chromosome 1 of Rhodobacter sphaeroides 2.4.1.</title>
        <authorList>
            <person name="Copeland A."/>
            <person name="Lucas S."/>
            <person name="Lapidus A."/>
            <person name="Barry K."/>
            <person name="Detter J.C."/>
            <person name="Glavina T."/>
            <person name="Hammon N."/>
            <person name="Israni S."/>
            <person name="Pitluck S."/>
            <person name="Richardson P."/>
            <person name="Mackenzie C."/>
            <person name="Choudhary M."/>
            <person name="Larimer F."/>
            <person name="Hauser L.J."/>
            <person name="Land M."/>
            <person name="Donohue T.J."/>
            <person name="Kaplan S."/>
        </authorList>
    </citation>
    <scope>NUCLEOTIDE SEQUENCE [LARGE SCALE GENOMIC DNA]</scope>
    <source>
        <strain>ATCC 17023 / DSM 158 / JCM 6121 / CCUG 31486 / LMG 2827 / NBRC 12203 / NCIMB 8253 / ATH 2.4.1.</strain>
    </source>
</reference>
<dbReference type="EMBL" id="CP000143">
    <property type="protein sequence ID" value="ABA78422.1"/>
    <property type="molecule type" value="Genomic_DNA"/>
</dbReference>
<dbReference type="RefSeq" id="WP_011337365.1">
    <property type="nucleotide sequence ID" value="NC_007493.2"/>
</dbReference>
<dbReference type="RefSeq" id="YP_352323.1">
    <property type="nucleotide sequence ID" value="NC_007493.2"/>
</dbReference>
<dbReference type="SMR" id="Q3J462"/>
<dbReference type="STRING" id="272943.RSP_2268"/>
<dbReference type="EnsemblBacteria" id="ABA78422">
    <property type="protein sequence ID" value="ABA78422"/>
    <property type="gene ID" value="RSP_2268"/>
</dbReference>
<dbReference type="GeneID" id="3719797"/>
<dbReference type="KEGG" id="rsp:RSP_2268"/>
<dbReference type="PATRIC" id="fig|272943.9.peg.1172"/>
<dbReference type="eggNOG" id="COG2220">
    <property type="taxonomic scope" value="Bacteria"/>
</dbReference>
<dbReference type="OrthoDB" id="9789133at2"/>
<dbReference type="PhylomeDB" id="Q3J462"/>
<dbReference type="Proteomes" id="UP000002703">
    <property type="component" value="Chromosome 1"/>
</dbReference>
<dbReference type="GO" id="GO:0016787">
    <property type="term" value="F:hydrolase activity"/>
    <property type="evidence" value="ECO:0007669"/>
    <property type="project" value="UniProtKB-UniRule"/>
</dbReference>
<dbReference type="Gene3D" id="3.60.15.10">
    <property type="entry name" value="Ribonuclease Z/Hydroxyacylglutathione hydrolase-like"/>
    <property type="match status" value="1"/>
</dbReference>
<dbReference type="HAMAP" id="MF_00457">
    <property type="entry name" value="UPF0173"/>
    <property type="match status" value="1"/>
</dbReference>
<dbReference type="InterPro" id="IPR001279">
    <property type="entry name" value="Metallo-B-lactamas"/>
</dbReference>
<dbReference type="InterPro" id="IPR036866">
    <property type="entry name" value="RibonucZ/Hydroxyglut_hydro"/>
</dbReference>
<dbReference type="InterPro" id="IPR022877">
    <property type="entry name" value="UPF0173"/>
</dbReference>
<dbReference type="InterPro" id="IPR050114">
    <property type="entry name" value="UPF0173_UPF0282_UlaG_hydrolase"/>
</dbReference>
<dbReference type="NCBIfam" id="NF001911">
    <property type="entry name" value="PRK00685.1"/>
    <property type="match status" value="1"/>
</dbReference>
<dbReference type="PANTHER" id="PTHR43546:SF3">
    <property type="entry name" value="UPF0173 METAL-DEPENDENT HYDROLASE MJ1163"/>
    <property type="match status" value="1"/>
</dbReference>
<dbReference type="PANTHER" id="PTHR43546">
    <property type="entry name" value="UPF0173 METAL-DEPENDENT HYDROLASE MJ1163-RELATED"/>
    <property type="match status" value="1"/>
</dbReference>
<dbReference type="Pfam" id="PF12706">
    <property type="entry name" value="Lactamase_B_2"/>
    <property type="match status" value="1"/>
</dbReference>
<dbReference type="SMART" id="SM00849">
    <property type="entry name" value="Lactamase_B"/>
    <property type="match status" value="1"/>
</dbReference>
<dbReference type="SUPFAM" id="SSF56281">
    <property type="entry name" value="Metallo-hydrolase/oxidoreductase"/>
    <property type="match status" value="1"/>
</dbReference>
<evidence type="ECO:0000255" key="1">
    <source>
        <dbReference type="HAMAP-Rule" id="MF_00457"/>
    </source>
</evidence>
<protein>
    <recommendedName>
        <fullName evidence="1">UPF0173 metal-dependent hydrolase RHOS4_08540</fullName>
    </recommendedName>
</protein>
<feature type="chain" id="PRO_0000367207" description="UPF0173 metal-dependent hydrolase RHOS4_08540">
    <location>
        <begin position="1"/>
        <end position="230"/>
    </location>
</feature>
<sequence>MKITWLGHSGFRIAIEQAVLLVDPWLTGNPLFPADRREEALAGATHILITHGHGDHTGDTVAIAKERGLPVVGIYDLVTWLQEKEGIDGIGFNKGGTVTLGGARVTMVQATHSSSMSGEAGPIYTGTESGYMIAGEGHVIYLSGDTDIMADMGWMGEYHRPDVGILSAGGHFTMDMKRAAFAARKYFDFRTVIPCHYRTFPLLEQSAEALKEGLPGVEVIEPQVLVPIDI</sequence>
<gene>
    <name type="ordered locus">RHOS4_08540</name>
    <name type="ORF">RSP_2268</name>
</gene>